<organism>
    <name type="scientific">Methanothermobacter thermautotrophicus (strain ATCC 29096 / DSM 1053 / JCM 10044 / NBRC 100330 / Delta H)</name>
    <name type="common">Methanobacterium thermoautotrophicum</name>
    <dbReference type="NCBI Taxonomy" id="187420"/>
    <lineage>
        <taxon>Archaea</taxon>
        <taxon>Methanobacteriati</taxon>
        <taxon>Methanobacteriota</taxon>
        <taxon>Methanomada group</taxon>
        <taxon>Methanobacteria</taxon>
        <taxon>Methanobacteriales</taxon>
        <taxon>Methanobacteriaceae</taxon>
        <taxon>Methanothermobacter</taxon>
    </lineage>
</organism>
<accession>O26206</accession>
<evidence type="ECO:0000250" key="1"/>
<evidence type="ECO:0000255" key="2"/>
<evidence type="ECO:0000305" key="3"/>
<name>AQPM_METTH</name>
<dbReference type="EMBL" id="AE000666">
    <property type="protein sequence ID" value="AAB84602.1"/>
    <property type="molecule type" value="Genomic_DNA"/>
</dbReference>
<dbReference type="PIR" id="D69004">
    <property type="entry name" value="D69004"/>
</dbReference>
<dbReference type="RefSeq" id="WP_010875742.1">
    <property type="nucleotide sequence ID" value="NC_000916.1"/>
</dbReference>
<dbReference type="SMR" id="O26206"/>
<dbReference type="STRING" id="187420.MTH_103"/>
<dbReference type="PaxDb" id="187420-MTH_103"/>
<dbReference type="EnsemblBacteria" id="AAB84602">
    <property type="protein sequence ID" value="AAB84602"/>
    <property type="gene ID" value="MTH_103"/>
</dbReference>
<dbReference type="KEGG" id="mth:MTH_103"/>
<dbReference type="PATRIC" id="fig|187420.15.peg.75"/>
<dbReference type="HOGENOM" id="CLU_020019_3_2_2"/>
<dbReference type="InParanoid" id="O26206"/>
<dbReference type="Proteomes" id="UP000005223">
    <property type="component" value="Chromosome"/>
</dbReference>
<dbReference type="GO" id="GO:0005886">
    <property type="term" value="C:plasma membrane"/>
    <property type="evidence" value="ECO:0007669"/>
    <property type="project" value="UniProtKB-SubCell"/>
</dbReference>
<dbReference type="GO" id="GO:0015250">
    <property type="term" value="F:water channel activity"/>
    <property type="evidence" value="ECO:0007669"/>
    <property type="project" value="TreeGrafter"/>
</dbReference>
<dbReference type="Gene3D" id="1.20.1080.10">
    <property type="entry name" value="Glycerol uptake facilitator protein"/>
    <property type="match status" value="1"/>
</dbReference>
<dbReference type="InterPro" id="IPR023271">
    <property type="entry name" value="Aquaporin-like"/>
</dbReference>
<dbReference type="InterPro" id="IPR034294">
    <property type="entry name" value="Aquaporin_transptr"/>
</dbReference>
<dbReference type="InterPro" id="IPR000425">
    <property type="entry name" value="MIP"/>
</dbReference>
<dbReference type="InterPro" id="IPR022357">
    <property type="entry name" value="MIP_CS"/>
</dbReference>
<dbReference type="NCBIfam" id="TIGR00861">
    <property type="entry name" value="MIP"/>
    <property type="match status" value="1"/>
</dbReference>
<dbReference type="PANTHER" id="PTHR19139">
    <property type="entry name" value="AQUAPORIN TRANSPORTER"/>
    <property type="match status" value="1"/>
</dbReference>
<dbReference type="PANTHER" id="PTHR19139:SF199">
    <property type="entry name" value="MIP17260P"/>
    <property type="match status" value="1"/>
</dbReference>
<dbReference type="Pfam" id="PF00230">
    <property type="entry name" value="MIP"/>
    <property type="match status" value="1"/>
</dbReference>
<dbReference type="PRINTS" id="PR00783">
    <property type="entry name" value="MINTRINSICP"/>
</dbReference>
<dbReference type="SUPFAM" id="SSF81338">
    <property type="entry name" value="Aquaporin-like"/>
    <property type="match status" value="1"/>
</dbReference>
<dbReference type="PROSITE" id="PS00221">
    <property type="entry name" value="MIP"/>
    <property type="match status" value="1"/>
</dbReference>
<proteinExistence type="inferred from homology"/>
<keyword id="KW-1003">Cell membrane</keyword>
<keyword id="KW-0472">Membrane</keyword>
<keyword id="KW-1185">Reference proteome</keyword>
<keyword id="KW-0677">Repeat</keyword>
<keyword id="KW-0812">Transmembrane</keyword>
<keyword id="KW-1133">Transmembrane helix</keyword>
<keyword id="KW-0813">Transport</keyword>
<sequence length="246" mass="25373">MVSLTKRCIAEFIGTFFLVFFGAGAAAITLMIASGGTAPNPFNIGIGLLGGLGDWVAIGLAFGFAIAASIYALGNISGCHINPAVTIGLWSVKKFPGRDVVPYIIAQLLGAAFASFIFLQCAGITAATIGGLGATAPFPGIGYWQAMLAETVGTFLLMITIMGIAVDERAPKGFAGIIIGLTVAGIITTIGNITGSSLNPARTFGPYLNDMVFAGTNLWNYFPIYVIGPVVGAVLAALTYQYLTSE</sequence>
<protein>
    <recommendedName>
        <fullName>Aquaporin AqpM</fullName>
    </recommendedName>
</protein>
<feature type="chain" id="PRO_0000064005" description="Aquaporin AqpM">
    <location>
        <begin position="1"/>
        <end position="246"/>
    </location>
</feature>
<feature type="topological domain" description="Cytoplasmic" evidence="2">
    <location>
        <begin position="1"/>
        <end position="11"/>
    </location>
</feature>
<feature type="transmembrane region" description="Helical" evidence="2">
    <location>
        <begin position="12"/>
        <end position="32"/>
    </location>
</feature>
<feature type="topological domain" description="Extracellular" evidence="2">
    <location>
        <begin position="33"/>
        <end position="45"/>
    </location>
</feature>
<feature type="transmembrane region" description="Helical" evidence="2">
    <location>
        <begin position="46"/>
        <end position="66"/>
    </location>
</feature>
<feature type="topological domain" description="Cytoplasmic" evidence="2">
    <location>
        <begin position="67"/>
        <end position="69"/>
    </location>
</feature>
<feature type="transmembrane region" description="Helical" evidence="2">
    <location>
        <begin position="70"/>
        <end position="90"/>
    </location>
</feature>
<feature type="topological domain" description="Extracellular" evidence="2">
    <location>
        <begin position="91"/>
        <end position="103"/>
    </location>
</feature>
<feature type="transmembrane region" description="Helical" evidence="2">
    <location>
        <begin position="104"/>
        <end position="124"/>
    </location>
</feature>
<feature type="topological domain" description="Cytoplasmic" evidence="2">
    <location>
        <begin position="125"/>
        <end position="145"/>
    </location>
</feature>
<feature type="transmembrane region" description="Helical" evidence="2">
    <location>
        <begin position="146"/>
        <end position="166"/>
    </location>
</feature>
<feature type="topological domain" description="Extracellular" evidence="2">
    <location>
        <begin position="167"/>
        <end position="172"/>
    </location>
</feature>
<feature type="transmembrane region" description="Helical" evidence="2">
    <location>
        <begin position="173"/>
        <end position="193"/>
    </location>
</feature>
<feature type="topological domain" description="Cytoplasmic" evidence="2">
    <location>
        <begin position="194"/>
        <end position="217"/>
    </location>
</feature>
<feature type="transmembrane region" description="Helical" evidence="2">
    <location>
        <begin position="218"/>
        <end position="238"/>
    </location>
</feature>
<feature type="topological domain" description="Extracellular" evidence="2">
    <location>
        <begin position="239"/>
        <end position="246"/>
    </location>
</feature>
<feature type="short sequence motif" description="NPA 1">
    <location>
        <begin position="82"/>
        <end position="84"/>
    </location>
</feature>
<feature type="short sequence motif" description="NPA 2">
    <location>
        <begin position="199"/>
        <end position="201"/>
    </location>
</feature>
<comment type="function">
    <text evidence="1">Channel that permits osmotically driven movement of water in both directions. It mediates rapid entry or exit of water in response to abrupt changes in osmolarity. Also exhibits a transient but reproducible increase in the initial glycerol flux (By similarity).</text>
</comment>
<comment type="subunit">
    <text evidence="1">Homotetramer.</text>
</comment>
<comment type="subcellular location">
    <subcellularLocation>
        <location>Cell membrane</location>
        <topology>Multi-pass membrane protein</topology>
    </subcellularLocation>
</comment>
<comment type="domain">
    <text>Aquaporins contain two tandem repeats each containing three membrane-spanning domains and a pore-forming loop with the signature motif Asn-Pro-Ala (NPA).</text>
</comment>
<comment type="similarity">
    <text evidence="3">Belongs to the MIP/aquaporin (TC 1.A.8) family.</text>
</comment>
<gene>
    <name type="primary">aqpM</name>
    <name type="ordered locus">MTH_103</name>
</gene>
<reference key="1">
    <citation type="journal article" date="1997" name="J. Bacteriol.">
        <title>Complete genome sequence of Methanobacterium thermoautotrophicum deltaH: functional analysis and comparative genomics.</title>
        <authorList>
            <person name="Smith D.R."/>
            <person name="Doucette-Stamm L.A."/>
            <person name="Deloughery C."/>
            <person name="Lee H.-M."/>
            <person name="Dubois J."/>
            <person name="Aldredge T."/>
            <person name="Bashirzadeh R."/>
            <person name="Blakely D."/>
            <person name="Cook R."/>
            <person name="Gilbert K."/>
            <person name="Harrison D."/>
            <person name="Hoang L."/>
            <person name="Keagle P."/>
            <person name="Lumm W."/>
            <person name="Pothier B."/>
            <person name="Qiu D."/>
            <person name="Spadafora R."/>
            <person name="Vicare R."/>
            <person name="Wang Y."/>
            <person name="Wierzbowski J."/>
            <person name="Gibson R."/>
            <person name="Jiwani N."/>
            <person name="Caruso A."/>
            <person name="Bush D."/>
            <person name="Safer H."/>
            <person name="Patwell D."/>
            <person name="Prabhakar S."/>
            <person name="McDougall S."/>
            <person name="Shimer G."/>
            <person name="Goyal A."/>
            <person name="Pietrovski S."/>
            <person name="Church G.M."/>
            <person name="Daniels C.J."/>
            <person name="Mao J.-I."/>
            <person name="Rice P."/>
            <person name="Noelling J."/>
            <person name="Reeve J.N."/>
        </authorList>
    </citation>
    <scope>NUCLEOTIDE SEQUENCE [LARGE SCALE GENOMIC DNA]</scope>
    <source>
        <strain>ATCC 29096 / DSM 1053 / JCM 10044 / NBRC 100330 / Delta H</strain>
    </source>
</reference>